<protein>
    <recommendedName>
        <fullName evidence="10">Early nodulin-like protein 12</fullName>
        <shortName evidence="10">AtENODL12</shortName>
    </recommendedName>
    <alternativeName>
        <fullName evidence="12">Phytocyanin-like protein ENODL12</fullName>
    </alternativeName>
</protein>
<reference key="1">
    <citation type="journal article" date="2009" name="Biosci. Biotechnol. Biochem.">
        <title>Genome-wide identification, structure and expression studies, and mutant collection of 22 early nodulin-like protein genes in Arabidopsis.</title>
        <authorList>
            <person name="Mashiguchi K."/>
            <person name="Asami T."/>
            <person name="Suzuki Y."/>
        </authorList>
    </citation>
    <scope>NUCLEOTIDE SEQUENCE [MRNA]</scope>
    <scope>TISSUE SPECIFICITY</scope>
    <scope>GENE FAMILY</scope>
    <scope>NOMENCLATURE</scope>
    <source>
        <strain>cv. Columbia</strain>
    </source>
</reference>
<reference key="2">
    <citation type="journal article" date="1999" name="Nature">
        <title>Sequence and analysis of chromosome 4 of the plant Arabidopsis thaliana.</title>
        <authorList>
            <person name="Mayer K.F.X."/>
            <person name="Schueller C."/>
            <person name="Wambutt R."/>
            <person name="Murphy G."/>
            <person name="Volckaert G."/>
            <person name="Pohl T."/>
            <person name="Duesterhoeft A."/>
            <person name="Stiekema W."/>
            <person name="Entian K.-D."/>
            <person name="Terryn N."/>
            <person name="Harris B."/>
            <person name="Ansorge W."/>
            <person name="Brandt P."/>
            <person name="Grivell L.A."/>
            <person name="Rieger M."/>
            <person name="Weichselgartner M."/>
            <person name="de Simone V."/>
            <person name="Obermaier B."/>
            <person name="Mache R."/>
            <person name="Mueller M."/>
            <person name="Kreis M."/>
            <person name="Delseny M."/>
            <person name="Puigdomenech P."/>
            <person name="Watson M."/>
            <person name="Schmidtheini T."/>
            <person name="Reichert B."/>
            <person name="Portetelle D."/>
            <person name="Perez-Alonso M."/>
            <person name="Boutry M."/>
            <person name="Bancroft I."/>
            <person name="Vos P."/>
            <person name="Hoheisel J."/>
            <person name="Zimmermann W."/>
            <person name="Wedler H."/>
            <person name="Ridley P."/>
            <person name="Langham S.-A."/>
            <person name="McCullagh B."/>
            <person name="Bilham L."/>
            <person name="Robben J."/>
            <person name="van der Schueren J."/>
            <person name="Grymonprez B."/>
            <person name="Chuang Y.-J."/>
            <person name="Vandenbussche F."/>
            <person name="Braeken M."/>
            <person name="Weltjens I."/>
            <person name="Voet M."/>
            <person name="Bastiaens I."/>
            <person name="Aert R."/>
            <person name="Defoor E."/>
            <person name="Weitzenegger T."/>
            <person name="Bothe G."/>
            <person name="Ramsperger U."/>
            <person name="Hilbert H."/>
            <person name="Braun M."/>
            <person name="Holzer E."/>
            <person name="Brandt A."/>
            <person name="Peters S."/>
            <person name="van Staveren M."/>
            <person name="Dirkse W."/>
            <person name="Mooijman P."/>
            <person name="Klein Lankhorst R."/>
            <person name="Rose M."/>
            <person name="Hauf J."/>
            <person name="Koetter P."/>
            <person name="Berneiser S."/>
            <person name="Hempel S."/>
            <person name="Feldpausch M."/>
            <person name="Lamberth S."/>
            <person name="Van den Daele H."/>
            <person name="De Keyser A."/>
            <person name="Buysshaert C."/>
            <person name="Gielen J."/>
            <person name="Villarroel R."/>
            <person name="De Clercq R."/>
            <person name="van Montagu M."/>
            <person name="Rogers J."/>
            <person name="Cronin A."/>
            <person name="Quail M.A."/>
            <person name="Bray-Allen S."/>
            <person name="Clark L."/>
            <person name="Doggett J."/>
            <person name="Hall S."/>
            <person name="Kay M."/>
            <person name="Lennard N."/>
            <person name="McLay K."/>
            <person name="Mayes R."/>
            <person name="Pettett A."/>
            <person name="Rajandream M.A."/>
            <person name="Lyne M."/>
            <person name="Benes V."/>
            <person name="Rechmann S."/>
            <person name="Borkova D."/>
            <person name="Bloecker H."/>
            <person name="Scharfe M."/>
            <person name="Grimm M."/>
            <person name="Loehnert T.-H."/>
            <person name="Dose S."/>
            <person name="de Haan M."/>
            <person name="Maarse A.C."/>
            <person name="Schaefer M."/>
            <person name="Mueller-Auer S."/>
            <person name="Gabel C."/>
            <person name="Fuchs M."/>
            <person name="Fartmann B."/>
            <person name="Granderath K."/>
            <person name="Dauner D."/>
            <person name="Herzl A."/>
            <person name="Neumann S."/>
            <person name="Argiriou A."/>
            <person name="Vitale D."/>
            <person name="Liguori R."/>
            <person name="Piravandi E."/>
            <person name="Massenet O."/>
            <person name="Quigley F."/>
            <person name="Clabauld G."/>
            <person name="Muendlein A."/>
            <person name="Felber R."/>
            <person name="Schnabl S."/>
            <person name="Hiller R."/>
            <person name="Schmidt W."/>
            <person name="Lecharny A."/>
            <person name="Aubourg S."/>
            <person name="Chefdor F."/>
            <person name="Cooke R."/>
            <person name="Berger C."/>
            <person name="Monfort A."/>
            <person name="Casacuberta E."/>
            <person name="Gibbons T."/>
            <person name="Weber N."/>
            <person name="Vandenbol M."/>
            <person name="Bargues M."/>
            <person name="Terol J."/>
            <person name="Torres A."/>
            <person name="Perez-Perez A."/>
            <person name="Purnelle B."/>
            <person name="Bent E."/>
            <person name="Johnson S."/>
            <person name="Tacon D."/>
            <person name="Jesse T."/>
            <person name="Heijnen L."/>
            <person name="Schwarz S."/>
            <person name="Scholler P."/>
            <person name="Heber S."/>
            <person name="Francs P."/>
            <person name="Bielke C."/>
            <person name="Frishman D."/>
            <person name="Haase D."/>
            <person name="Lemcke K."/>
            <person name="Mewes H.-W."/>
            <person name="Stocker S."/>
            <person name="Zaccaria P."/>
            <person name="Bevan M."/>
            <person name="Wilson R.K."/>
            <person name="de la Bastide M."/>
            <person name="Habermann K."/>
            <person name="Parnell L."/>
            <person name="Dedhia N."/>
            <person name="Gnoj L."/>
            <person name="Schutz K."/>
            <person name="Huang E."/>
            <person name="Spiegel L."/>
            <person name="Sekhon M."/>
            <person name="Murray J."/>
            <person name="Sheet P."/>
            <person name="Cordes M."/>
            <person name="Abu-Threideh J."/>
            <person name="Stoneking T."/>
            <person name="Kalicki J."/>
            <person name="Graves T."/>
            <person name="Harmon G."/>
            <person name="Edwards J."/>
            <person name="Latreille P."/>
            <person name="Courtney L."/>
            <person name="Cloud J."/>
            <person name="Abbott A."/>
            <person name="Scott K."/>
            <person name="Johnson D."/>
            <person name="Minx P."/>
            <person name="Bentley D."/>
            <person name="Fulton B."/>
            <person name="Miller N."/>
            <person name="Greco T."/>
            <person name="Kemp K."/>
            <person name="Kramer J."/>
            <person name="Fulton L."/>
            <person name="Mardis E."/>
            <person name="Dante M."/>
            <person name="Pepin K."/>
            <person name="Hillier L.W."/>
            <person name="Nelson J."/>
            <person name="Spieth J."/>
            <person name="Ryan E."/>
            <person name="Andrews S."/>
            <person name="Geisel C."/>
            <person name="Layman D."/>
            <person name="Du H."/>
            <person name="Ali J."/>
            <person name="Berghoff A."/>
            <person name="Jones K."/>
            <person name="Drone K."/>
            <person name="Cotton M."/>
            <person name="Joshu C."/>
            <person name="Antonoiu B."/>
            <person name="Zidanic M."/>
            <person name="Strong C."/>
            <person name="Sun H."/>
            <person name="Lamar B."/>
            <person name="Yordan C."/>
            <person name="Ma P."/>
            <person name="Zhong J."/>
            <person name="Preston R."/>
            <person name="Vil D."/>
            <person name="Shekher M."/>
            <person name="Matero A."/>
            <person name="Shah R."/>
            <person name="Swaby I.K."/>
            <person name="O'Shaughnessy A."/>
            <person name="Rodriguez M."/>
            <person name="Hoffman J."/>
            <person name="Till S."/>
            <person name="Granat S."/>
            <person name="Shohdy N."/>
            <person name="Hasegawa A."/>
            <person name="Hameed A."/>
            <person name="Lodhi M."/>
            <person name="Johnson A."/>
            <person name="Chen E."/>
            <person name="Marra M.A."/>
            <person name="Martienssen R."/>
            <person name="McCombie W.R."/>
        </authorList>
    </citation>
    <scope>NUCLEOTIDE SEQUENCE [LARGE SCALE GENOMIC DNA]</scope>
    <source>
        <strain>cv. Columbia</strain>
    </source>
</reference>
<reference key="3">
    <citation type="journal article" date="2017" name="Plant J.">
        <title>Araport11: a complete reannotation of the Arabidopsis thaliana reference genome.</title>
        <authorList>
            <person name="Cheng C.Y."/>
            <person name="Krishnakumar V."/>
            <person name="Chan A.P."/>
            <person name="Thibaud-Nissen F."/>
            <person name="Schobel S."/>
            <person name="Town C.D."/>
        </authorList>
    </citation>
    <scope>GENOME REANNOTATION</scope>
    <source>
        <strain>cv. Columbia</strain>
    </source>
</reference>
<reference key="4">
    <citation type="journal article" date="2003" name="Plant Physiol.">
        <title>Identification of glycosylphosphatidylinositol-anchored proteins in Arabidopsis. A proteomic and genomic analysis.</title>
        <authorList>
            <person name="Borner G.H.H."/>
            <person name="Lilley K.S."/>
            <person name="Stevens T.J."/>
            <person name="Dupree P."/>
        </authorList>
    </citation>
    <scope>GENE FAMILY</scope>
    <source>
        <strain>cv. Columbia</strain>
    </source>
</reference>
<reference key="5">
    <citation type="journal article" date="2007" name="Plant J.">
        <title>Identification of genes expressed in the Arabidopsis female gametophyte.</title>
        <authorList>
            <person name="Steffen J.G."/>
            <person name="Kang I.-H."/>
            <person name="Macfarlane J."/>
            <person name="Drews G.N."/>
        </authorList>
    </citation>
    <scope>TISSUE SPECIFICITY</scope>
</reference>
<reference key="6">
    <citation type="journal article" date="2007" name="Plant Physiol.">
        <title>An early nodulin-like protein accumulates in the sieve element plasma membrane of Arabidopsis.</title>
        <authorList>
            <person name="Khan J.A."/>
            <person name="Wang Q."/>
            <person name="Sjoelund R.D."/>
            <person name="Schulz A."/>
            <person name="Thompson G.A."/>
        </authorList>
    </citation>
    <scope>DEVELOPMENTAL STAGE</scope>
    <scope>TISSUE SPECIFICITY</scope>
</reference>
<reference key="7">
    <citation type="journal article" date="2014" name="Plant Cell Physiol.">
        <title>Emerging functions of nodulin-like proteins in non-nodulating plant species.</title>
        <authorList>
            <person name="Denance N."/>
            <person name="Szurek B."/>
            <person name="Noel L.D."/>
        </authorList>
    </citation>
    <scope>REVIEW ON NODULIN-LIKE PROTEINS</scope>
</reference>
<reference key="8">
    <citation type="journal article" date="2016" name="Curr. Biol.">
        <title>Maternal ENODLs are required for pollen tube reception in Arabidopsis.</title>
        <authorList>
            <person name="Hou Y."/>
            <person name="Guo X."/>
            <person name="Cyprys P."/>
            <person name="Zhang Y."/>
            <person name="Bleckmann A."/>
            <person name="Cai L."/>
            <person name="Huang Q."/>
            <person name="Luo Y."/>
            <person name="Gu H."/>
            <person name="Dresselhaus T."/>
            <person name="Dong J."/>
            <person name="Qu L.-J."/>
        </authorList>
    </citation>
    <scope>FUNCTION</scope>
    <scope>DISRUPTION PHENOTYPE</scope>
    <scope>DEVELOPMENTAL STAGE</scope>
</reference>
<sequence>MGIIVPVLTLVFLLFAKVSHGASNPRVILVGGSVGSWKVPDSPNNTLNHWAENNRFKVGDFIVWKYDMKVDSVLQVTKEDYESCNTANPLKQYNDGNTKVALDKSGPYFFISGAPGNCAKGEKITLVVLAERKSGGGSSSGDAPKVSPVSPTAQTPAPAPGPAAAHNAAVGLKVASGWFLTAVVVGLAMA</sequence>
<proteinExistence type="evidence at transcript level"/>
<evidence type="ECO:0000255" key="1"/>
<evidence type="ECO:0000255" key="2">
    <source>
        <dbReference type="PROSITE-ProRule" id="PRU00498"/>
    </source>
</evidence>
<evidence type="ECO:0000255" key="3">
    <source>
        <dbReference type="PROSITE-ProRule" id="PRU00818"/>
    </source>
</evidence>
<evidence type="ECO:0000256" key="4">
    <source>
        <dbReference type="SAM" id="MobiDB-lite"/>
    </source>
</evidence>
<evidence type="ECO:0000269" key="5">
    <source>
    </source>
</evidence>
<evidence type="ECO:0000269" key="6">
    <source>
    </source>
</evidence>
<evidence type="ECO:0000269" key="7">
    <source>
    </source>
</evidence>
<evidence type="ECO:0000269" key="8">
    <source>
    </source>
</evidence>
<evidence type="ECO:0000303" key="9">
    <source>
    </source>
</evidence>
<evidence type="ECO:0000303" key="10">
    <source>
    </source>
</evidence>
<evidence type="ECO:0000303" key="11">
    <source>
    </source>
</evidence>
<evidence type="ECO:0000305" key="12"/>
<evidence type="ECO:0000312" key="13">
    <source>
        <dbReference type="Araport" id="AT4G30590"/>
    </source>
</evidence>
<evidence type="ECO:0000312" key="14">
    <source>
        <dbReference type="EMBL" id="CAB79777.1"/>
    </source>
</evidence>
<dbReference type="EMBL" id="FJ587297">
    <property type="protein sequence ID" value="ACL93298.1"/>
    <property type="molecule type" value="mRNA"/>
</dbReference>
<dbReference type="EMBL" id="AL161577">
    <property type="protein sequence ID" value="CAB79777.1"/>
    <property type="molecule type" value="Genomic_DNA"/>
</dbReference>
<dbReference type="EMBL" id="CP002687">
    <property type="protein sequence ID" value="AEE85784.1"/>
    <property type="molecule type" value="Genomic_DNA"/>
</dbReference>
<dbReference type="PIR" id="H85357">
    <property type="entry name" value="H85357"/>
</dbReference>
<dbReference type="RefSeq" id="NP_194788.1">
    <property type="nucleotide sequence ID" value="NM_119205.3"/>
</dbReference>
<dbReference type="SMR" id="Q9M0A1"/>
<dbReference type="STRING" id="3702.Q9M0A1"/>
<dbReference type="GlyGen" id="Q9M0A1">
    <property type="glycosylation" value="2 sites"/>
</dbReference>
<dbReference type="PaxDb" id="3702-AT4G30590.1"/>
<dbReference type="ProteomicsDB" id="181075"/>
<dbReference type="EnsemblPlants" id="AT4G30590.1">
    <property type="protein sequence ID" value="AT4G30590.1"/>
    <property type="gene ID" value="AT4G30590"/>
</dbReference>
<dbReference type="GeneID" id="829182"/>
<dbReference type="Gramene" id="AT4G30590.1">
    <property type="protein sequence ID" value="AT4G30590.1"/>
    <property type="gene ID" value="AT4G30590"/>
</dbReference>
<dbReference type="KEGG" id="ath:AT4G30590"/>
<dbReference type="Araport" id="AT4G30590"/>
<dbReference type="TAIR" id="AT4G30590">
    <property type="gene designation" value="ENODL12"/>
</dbReference>
<dbReference type="eggNOG" id="ENOG502SS7B">
    <property type="taxonomic scope" value="Eukaryota"/>
</dbReference>
<dbReference type="HOGENOM" id="CLU_058719_1_2_1"/>
<dbReference type="InParanoid" id="Q9M0A1"/>
<dbReference type="OMA" id="GSWKVPD"/>
<dbReference type="OrthoDB" id="1937044at2759"/>
<dbReference type="PRO" id="PR:Q9M0A1"/>
<dbReference type="Proteomes" id="UP000006548">
    <property type="component" value="Chromosome 4"/>
</dbReference>
<dbReference type="ExpressionAtlas" id="Q9M0A1">
    <property type="expression patterns" value="baseline and differential"/>
</dbReference>
<dbReference type="GO" id="GO:0005886">
    <property type="term" value="C:plasma membrane"/>
    <property type="evidence" value="ECO:0007669"/>
    <property type="project" value="UniProtKB-SubCell"/>
</dbReference>
<dbReference type="GO" id="GO:0098552">
    <property type="term" value="C:side of membrane"/>
    <property type="evidence" value="ECO:0007669"/>
    <property type="project" value="UniProtKB-KW"/>
</dbReference>
<dbReference type="GO" id="GO:0009055">
    <property type="term" value="F:electron transfer activity"/>
    <property type="evidence" value="ECO:0007669"/>
    <property type="project" value="InterPro"/>
</dbReference>
<dbReference type="CDD" id="cd11019">
    <property type="entry name" value="OsENODL1_like"/>
    <property type="match status" value="1"/>
</dbReference>
<dbReference type="FunFam" id="2.60.40.420:FF:000069">
    <property type="entry name" value="Early nodulin-like protein 1"/>
    <property type="match status" value="1"/>
</dbReference>
<dbReference type="Gene3D" id="2.60.40.420">
    <property type="entry name" value="Cupredoxins - blue copper proteins"/>
    <property type="match status" value="1"/>
</dbReference>
<dbReference type="InterPro" id="IPR008972">
    <property type="entry name" value="Cupredoxin"/>
</dbReference>
<dbReference type="InterPro" id="IPR041846">
    <property type="entry name" value="ENL_dom"/>
</dbReference>
<dbReference type="InterPro" id="IPR039391">
    <property type="entry name" value="Phytocyanin-like"/>
</dbReference>
<dbReference type="InterPro" id="IPR003245">
    <property type="entry name" value="Phytocyanin_dom"/>
</dbReference>
<dbReference type="PANTHER" id="PTHR33021">
    <property type="entry name" value="BLUE COPPER PROTEIN"/>
    <property type="match status" value="1"/>
</dbReference>
<dbReference type="PANTHER" id="PTHR33021:SF540">
    <property type="entry name" value="EARLY NODULIN-LIKE PROTEIN 12"/>
    <property type="match status" value="1"/>
</dbReference>
<dbReference type="Pfam" id="PF02298">
    <property type="entry name" value="Cu_bind_like"/>
    <property type="match status" value="1"/>
</dbReference>
<dbReference type="SUPFAM" id="SSF49503">
    <property type="entry name" value="Cupredoxins"/>
    <property type="match status" value="1"/>
</dbReference>
<dbReference type="PROSITE" id="PS51485">
    <property type="entry name" value="PHYTOCYANIN"/>
    <property type="match status" value="1"/>
</dbReference>
<organism>
    <name type="scientific">Arabidopsis thaliana</name>
    <name type="common">Mouse-ear cress</name>
    <dbReference type="NCBI Taxonomy" id="3702"/>
    <lineage>
        <taxon>Eukaryota</taxon>
        <taxon>Viridiplantae</taxon>
        <taxon>Streptophyta</taxon>
        <taxon>Embryophyta</taxon>
        <taxon>Tracheophyta</taxon>
        <taxon>Spermatophyta</taxon>
        <taxon>Magnoliopsida</taxon>
        <taxon>eudicotyledons</taxon>
        <taxon>Gunneridae</taxon>
        <taxon>Pentapetalae</taxon>
        <taxon>rosids</taxon>
        <taxon>malvids</taxon>
        <taxon>Brassicales</taxon>
        <taxon>Brassicaceae</taxon>
        <taxon>Camelineae</taxon>
        <taxon>Arabidopsis</taxon>
    </lineage>
</organism>
<keyword id="KW-1003">Cell membrane</keyword>
<keyword id="KW-1015">Disulfide bond</keyword>
<keyword id="KW-0325">Glycoprotein</keyword>
<keyword id="KW-0336">GPI-anchor</keyword>
<keyword id="KW-0449">Lipoprotein</keyword>
<keyword id="KW-0472">Membrane</keyword>
<keyword id="KW-1185">Reference proteome</keyword>
<keyword id="KW-0732">Signal</keyword>
<name>ENL12_ARATH</name>
<accession>Q9M0A1</accession>
<gene>
    <name evidence="10" type="primary">ENODL12</name>
    <name evidence="9" type="synonym">DD56</name>
    <name evidence="10" type="synonym">EN12</name>
    <name evidence="13" type="ordered locus">At4g30590</name>
    <name evidence="14" type="ORF">F17I23.70</name>
</gene>
<comment type="function">
    <text evidence="8 11">May act as a carbohydrate transporter (PubMed:24470637). Required, together with ENODL11, ENODL12, ENODL13, ENODL14 and ENODL15, for male-female communication and pollen tube reception and burst at the synergid cell surface of the female gametophyte (PubMed:27524487).</text>
</comment>
<comment type="subcellular location">
    <subcellularLocation>
        <location evidence="1">Cell membrane</location>
        <topology evidence="1">Lipid-anchor</topology>
        <topology evidence="1">GPI-anchor</topology>
    </subcellularLocation>
</comment>
<comment type="tissue specificity">
    <text evidence="5 6 7">Confined to flowers and siliques (PubMed:17293437, PubMed:19897921). Expressed in female gametophytes (PubMed:17559508).</text>
</comment>
<comment type="developmental stage">
    <text evidence="5 8">In flowers, expressed in anthers, pollen and developing ovules (e.g. in egg cells) (PubMed:17293437). In developing ovules, accumulates mainly in the micropylar region of the embryo sac (PubMed:27524487).</text>
</comment>
<comment type="disruption phenotype">
    <text evidence="8">No visible phenotype (PubMed:27524487). Plants lacking ENODL11, ENODL12, ENODL13, ENODL14 and ENODL15 have a reduced seed set due to aborted ovules as a result of pollen tubes failling to rupture and release their sperm cell cargo (PubMed:27524487).</text>
</comment>
<comment type="similarity">
    <text evidence="12">Belongs to the early nodulin-like (ENODL) family.</text>
</comment>
<feature type="signal peptide" evidence="1">
    <location>
        <begin position="1"/>
        <end position="21"/>
    </location>
</feature>
<feature type="chain" id="PRO_5014313061" description="Early nodulin-like protein 12">
    <location>
        <begin position="22"/>
        <end position="167"/>
    </location>
</feature>
<feature type="propeptide" id="PRO_0000457744" description="Removed in mature form" evidence="1">
    <location>
        <begin position="168"/>
        <end position="190"/>
    </location>
</feature>
<feature type="domain" description="Phytocyanin" evidence="3">
    <location>
        <begin position="26"/>
        <end position="130"/>
    </location>
</feature>
<feature type="region of interest" description="Disordered" evidence="4">
    <location>
        <begin position="135"/>
        <end position="164"/>
    </location>
</feature>
<feature type="compositionally biased region" description="Low complexity" evidence="4">
    <location>
        <begin position="151"/>
        <end position="164"/>
    </location>
</feature>
<feature type="lipid moiety-binding region" description="GPI-anchor amidated asparagine" evidence="1">
    <location>
        <position position="167"/>
    </location>
</feature>
<feature type="glycosylation site" description="N-linked (GlcNAc...) asparagine" evidence="2">
    <location>
        <position position="44"/>
    </location>
</feature>
<feature type="disulfide bond" evidence="3">
    <location>
        <begin position="84"/>
        <end position="118"/>
    </location>
</feature>